<dbReference type="EMBL" id="DQ680143">
    <property type="protein sequence ID" value="ABG76011.1"/>
    <property type="molecule type" value="mRNA"/>
</dbReference>
<dbReference type="EMBL" id="AC128643">
    <property type="protein sequence ID" value="AAX95068.1"/>
    <property type="status" value="ALT_SEQ"/>
    <property type="molecule type" value="Genomic_DNA"/>
</dbReference>
<dbReference type="EMBL" id="DP000010">
    <property type="protein sequence ID" value="ABA91626.1"/>
    <property type="status" value="ALT_SEQ"/>
    <property type="molecule type" value="Genomic_DNA"/>
</dbReference>
<dbReference type="EMBL" id="AP008217">
    <property type="protein sequence ID" value="BAF27706.1"/>
    <property type="status" value="ALT_SEQ"/>
    <property type="molecule type" value="Genomic_DNA"/>
</dbReference>
<dbReference type="EMBL" id="AP014967">
    <property type="status" value="NOT_ANNOTATED_CDS"/>
    <property type="molecule type" value="Genomic_DNA"/>
</dbReference>
<dbReference type="EMBL" id="CM000148">
    <property type="protein sequence ID" value="EEE51725.1"/>
    <property type="molecule type" value="Genomic_DNA"/>
</dbReference>
<dbReference type="EMBL" id="AK067523">
    <property type="status" value="NOT_ANNOTATED_CDS"/>
    <property type="molecule type" value="mRNA"/>
</dbReference>
<dbReference type="SMR" id="B9G9L9"/>
<dbReference type="FunCoup" id="B9G9L9">
    <property type="interactions" value="112"/>
</dbReference>
<dbReference type="STRING" id="39947.B9G9L9"/>
<dbReference type="PaxDb" id="39947-B9G9L9"/>
<dbReference type="KEGG" id="dosa:Os11g0170900"/>
<dbReference type="InParanoid" id="B9G9L9"/>
<dbReference type="Proteomes" id="UP000000763">
    <property type="component" value="Chromosome 11"/>
</dbReference>
<dbReference type="Proteomes" id="UP000007752">
    <property type="component" value="Chromosome 11"/>
</dbReference>
<dbReference type="Proteomes" id="UP000059680">
    <property type="component" value="Chromosome 11"/>
</dbReference>
<dbReference type="InterPro" id="IPR044816">
    <property type="entry name" value="BURP"/>
</dbReference>
<dbReference type="InterPro" id="IPR004873">
    <property type="entry name" value="BURP_dom"/>
</dbReference>
<dbReference type="PANTHER" id="PTHR31236:SF2">
    <property type="entry name" value="BURP DOMAIN PROTEIN RD22"/>
    <property type="match status" value="1"/>
</dbReference>
<dbReference type="PANTHER" id="PTHR31236">
    <property type="entry name" value="BURP DOMAIN PROTEIN USPL1-LIKE"/>
    <property type="match status" value="1"/>
</dbReference>
<dbReference type="Pfam" id="PF03181">
    <property type="entry name" value="BURP"/>
    <property type="match status" value="1"/>
</dbReference>
<dbReference type="SMART" id="SM01045">
    <property type="entry name" value="BURP"/>
    <property type="match status" value="1"/>
</dbReference>
<dbReference type="PROSITE" id="PS51277">
    <property type="entry name" value="BURP"/>
    <property type="match status" value="1"/>
</dbReference>
<evidence type="ECO:0000255" key="1"/>
<evidence type="ECO:0000255" key="2">
    <source>
        <dbReference type="PROSITE-ProRule" id="PRU00604"/>
    </source>
</evidence>
<evidence type="ECO:0000256" key="3">
    <source>
        <dbReference type="SAM" id="MobiDB-lite"/>
    </source>
</evidence>
<evidence type="ECO:0000269" key="4">
    <source>
    </source>
</evidence>
<evidence type="ECO:0000305" key="5"/>
<organism>
    <name type="scientific">Oryza sativa subsp. japonica</name>
    <name type="common">Rice</name>
    <dbReference type="NCBI Taxonomy" id="39947"/>
    <lineage>
        <taxon>Eukaryota</taxon>
        <taxon>Viridiplantae</taxon>
        <taxon>Streptophyta</taxon>
        <taxon>Embryophyta</taxon>
        <taxon>Tracheophyta</taxon>
        <taxon>Spermatophyta</taxon>
        <taxon>Magnoliopsida</taxon>
        <taxon>Liliopsida</taxon>
        <taxon>Poales</taxon>
        <taxon>Poaceae</taxon>
        <taxon>BOP clade</taxon>
        <taxon>Oryzoideae</taxon>
        <taxon>Oryzeae</taxon>
        <taxon>Oryzinae</taxon>
        <taxon>Oryza</taxon>
        <taxon>Oryza sativa</taxon>
    </lineage>
</organism>
<accession>B9G9L9</accession>
<accession>A6XFC2</accession>
<accession>Q0IUA9</accession>
<accession>Q53P75</accession>
<protein>
    <recommendedName>
        <fullName>BURP domain-containing protein 17</fullName>
        <shortName>OsBURP17</shortName>
    </recommendedName>
</protein>
<feature type="signal peptide" evidence="1">
    <location>
        <begin position="1"/>
        <end position="20"/>
    </location>
</feature>
<feature type="chain" id="PRO_0000375844" description="BURP domain-containing protein 17">
    <location>
        <begin position="21"/>
        <end position="585"/>
    </location>
</feature>
<feature type="domain" description="BURP" evidence="2">
    <location>
        <begin position="363"/>
        <end position="584"/>
    </location>
</feature>
<feature type="region of interest" description="Disordered" evidence="3">
    <location>
        <begin position="63"/>
        <end position="82"/>
    </location>
</feature>
<feature type="sequence conflict" description="In Ref. 1; ABG76011." evidence="5" ref="1">
    <original>A</original>
    <variation>V</variation>
    <location>
        <position position="148"/>
    </location>
</feature>
<feature type="sequence conflict" description="In Ref. 1; ABG76011." evidence="5" ref="1">
    <original>D</original>
    <variation>E</variation>
    <location>
        <position position="550"/>
    </location>
</feature>
<feature type="sequence conflict" description="In Ref. 7; AK067523." evidence="5" ref="7">
    <original>A</original>
    <variation>T</variation>
    <location>
        <position position="578"/>
    </location>
</feature>
<comment type="tissue specificity">
    <text evidence="4">Expressed in leaves.</text>
</comment>
<comment type="sequence caution" evidence="5">
    <conflict type="erroneous gene model prediction">
        <sequence resource="EMBL-CDS" id="AAX95068"/>
    </conflict>
</comment>
<comment type="sequence caution" evidence="5">
    <conflict type="erroneous gene model prediction">
        <sequence resource="EMBL-CDS" id="ABA91626"/>
    </conflict>
</comment>
<comment type="sequence caution" evidence="5">
    <conflict type="erroneous gene model prediction">
        <sequence resource="EMBL-CDS" id="BAF27706"/>
    </conflict>
</comment>
<reference key="1">
    <citation type="submission" date="2006-06" db="EMBL/GenBank/DDBJ databases">
        <title>RD22-like gene from Oryza sativa.</title>
        <authorList>
            <person name="Yu S."/>
            <person name="Luo L."/>
        </authorList>
    </citation>
    <scope>NUCLEOTIDE SEQUENCE [MRNA]</scope>
    <source>
        <strain>cv. Huhan 3</strain>
    </source>
</reference>
<reference key="2">
    <citation type="journal article" date="2005" name="BMC Biol.">
        <title>The sequence of rice chromosomes 11 and 12, rich in disease resistance genes and recent gene duplications.</title>
        <authorList>
            <consortium name="The rice chromosomes 11 and 12 sequencing consortia"/>
        </authorList>
    </citation>
    <scope>NUCLEOTIDE SEQUENCE [LARGE SCALE GENOMIC DNA]</scope>
    <source>
        <strain>cv. Nipponbare</strain>
    </source>
</reference>
<reference key="3">
    <citation type="journal article" date="2005" name="Nature">
        <title>The map-based sequence of the rice genome.</title>
        <authorList>
            <consortium name="International rice genome sequencing project (IRGSP)"/>
        </authorList>
    </citation>
    <scope>NUCLEOTIDE SEQUENCE [LARGE SCALE GENOMIC DNA]</scope>
    <source>
        <strain>cv. Nipponbare</strain>
    </source>
</reference>
<reference key="4">
    <citation type="journal article" date="2008" name="Nucleic Acids Res.">
        <title>The rice annotation project database (RAP-DB): 2008 update.</title>
        <authorList>
            <consortium name="The rice annotation project (RAP)"/>
        </authorList>
    </citation>
    <scope>GENOME REANNOTATION</scope>
    <source>
        <strain>cv. Nipponbare</strain>
    </source>
</reference>
<reference key="5">
    <citation type="journal article" date="2013" name="Rice">
        <title>Improvement of the Oryza sativa Nipponbare reference genome using next generation sequence and optical map data.</title>
        <authorList>
            <person name="Kawahara Y."/>
            <person name="de la Bastide M."/>
            <person name="Hamilton J.P."/>
            <person name="Kanamori H."/>
            <person name="McCombie W.R."/>
            <person name="Ouyang S."/>
            <person name="Schwartz D.C."/>
            <person name="Tanaka T."/>
            <person name="Wu J."/>
            <person name="Zhou S."/>
            <person name="Childs K.L."/>
            <person name="Davidson R.M."/>
            <person name="Lin H."/>
            <person name="Quesada-Ocampo L."/>
            <person name="Vaillancourt B."/>
            <person name="Sakai H."/>
            <person name="Lee S.S."/>
            <person name="Kim J."/>
            <person name="Numa H."/>
            <person name="Itoh T."/>
            <person name="Buell C.R."/>
            <person name="Matsumoto T."/>
        </authorList>
    </citation>
    <scope>GENOME REANNOTATION</scope>
    <source>
        <strain>cv. Nipponbare</strain>
    </source>
</reference>
<reference key="6">
    <citation type="journal article" date="2005" name="PLoS Biol.">
        <title>The genomes of Oryza sativa: a history of duplications.</title>
        <authorList>
            <person name="Yu J."/>
            <person name="Wang J."/>
            <person name="Lin W."/>
            <person name="Li S."/>
            <person name="Li H."/>
            <person name="Zhou J."/>
            <person name="Ni P."/>
            <person name="Dong W."/>
            <person name="Hu S."/>
            <person name="Zeng C."/>
            <person name="Zhang J."/>
            <person name="Zhang Y."/>
            <person name="Li R."/>
            <person name="Xu Z."/>
            <person name="Li S."/>
            <person name="Li X."/>
            <person name="Zheng H."/>
            <person name="Cong L."/>
            <person name="Lin L."/>
            <person name="Yin J."/>
            <person name="Geng J."/>
            <person name="Li G."/>
            <person name="Shi J."/>
            <person name="Liu J."/>
            <person name="Lv H."/>
            <person name="Li J."/>
            <person name="Wang J."/>
            <person name="Deng Y."/>
            <person name="Ran L."/>
            <person name="Shi X."/>
            <person name="Wang X."/>
            <person name="Wu Q."/>
            <person name="Li C."/>
            <person name="Ren X."/>
            <person name="Wang J."/>
            <person name="Wang X."/>
            <person name="Li D."/>
            <person name="Liu D."/>
            <person name="Zhang X."/>
            <person name="Ji Z."/>
            <person name="Zhao W."/>
            <person name="Sun Y."/>
            <person name="Zhang Z."/>
            <person name="Bao J."/>
            <person name="Han Y."/>
            <person name="Dong L."/>
            <person name="Ji J."/>
            <person name="Chen P."/>
            <person name="Wu S."/>
            <person name="Liu J."/>
            <person name="Xiao Y."/>
            <person name="Bu D."/>
            <person name="Tan J."/>
            <person name="Yang L."/>
            <person name="Ye C."/>
            <person name="Zhang J."/>
            <person name="Xu J."/>
            <person name="Zhou Y."/>
            <person name="Yu Y."/>
            <person name="Zhang B."/>
            <person name="Zhuang S."/>
            <person name="Wei H."/>
            <person name="Liu B."/>
            <person name="Lei M."/>
            <person name="Yu H."/>
            <person name="Li Y."/>
            <person name="Xu H."/>
            <person name="Wei S."/>
            <person name="He X."/>
            <person name="Fang L."/>
            <person name="Zhang Z."/>
            <person name="Zhang Y."/>
            <person name="Huang X."/>
            <person name="Su Z."/>
            <person name="Tong W."/>
            <person name="Li J."/>
            <person name="Tong Z."/>
            <person name="Li S."/>
            <person name="Ye J."/>
            <person name="Wang L."/>
            <person name="Fang L."/>
            <person name="Lei T."/>
            <person name="Chen C.-S."/>
            <person name="Chen H.-C."/>
            <person name="Xu Z."/>
            <person name="Li H."/>
            <person name="Huang H."/>
            <person name="Zhang F."/>
            <person name="Xu H."/>
            <person name="Li N."/>
            <person name="Zhao C."/>
            <person name="Li S."/>
            <person name="Dong L."/>
            <person name="Huang Y."/>
            <person name="Li L."/>
            <person name="Xi Y."/>
            <person name="Qi Q."/>
            <person name="Li W."/>
            <person name="Zhang B."/>
            <person name="Hu W."/>
            <person name="Zhang Y."/>
            <person name="Tian X."/>
            <person name="Jiao Y."/>
            <person name="Liang X."/>
            <person name="Jin J."/>
            <person name="Gao L."/>
            <person name="Zheng W."/>
            <person name="Hao B."/>
            <person name="Liu S.-M."/>
            <person name="Wang W."/>
            <person name="Yuan L."/>
            <person name="Cao M."/>
            <person name="McDermott J."/>
            <person name="Samudrala R."/>
            <person name="Wang J."/>
            <person name="Wong G.K.-S."/>
            <person name="Yang H."/>
        </authorList>
    </citation>
    <scope>NUCLEOTIDE SEQUENCE [LARGE SCALE GENOMIC DNA]</scope>
    <source>
        <strain>cv. Nipponbare</strain>
    </source>
</reference>
<reference key="7">
    <citation type="journal article" date="2003" name="Science">
        <title>Collection, mapping, and annotation of over 28,000 cDNA clones from japonica rice.</title>
        <authorList>
            <consortium name="The rice full-length cDNA consortium"/>
        </authorList>
    </citation>
    <scope>NUCLEOTIDE SEQUENCE [LARGE SCALE MRNA]</scope>
    <source>
        <strain>cv. Nipponbare</strain>
    </source>
</reference>
<reference key="8">
    <citation type="journal article" date="2009" name="Planta">
        <title>Genome-wide identification of BURP domain-containing genes in rice reveals a gene family with diverse structures and responses to abiotic stresses.</title>
        <authorList>
            <person name="Ding X."/>
            <person name="Hou X."/>
            <person name="Xie K."/>
            <person name="Xiong L."/>
        </authorList>
    </citation>
    <scope>TISSUE SPECIFICITY</scope>
    <scope>GENE NOMENCLATURE</scope>
</reference>
<gene>
    <name type="primary">BURP17</name>
    <name type="synonym">RDB1</name>
    <name type="ordered locus">Os11g0170900</name>
    <name type="ordered locus">LOC_Os11g06980</name>
    <name type="ORF">OsJ_33118</name>
</gene>
<proteinExistence type="evidence at transcript level"/>
<sequence length="585" mass="64526">MDRIFARFFCFLLIAAVSHAADLSPEQYWRSILPNTPMPSSISQLLNYPYLPAVRLPRRTDAGQRNYKSSVSHVAERSHRVDDGQRNYKLSALPATNELPHRTDAGQRNYKSSVSPVAELPHRVDDGQRNYKLSALPATNELPHRTDAGQRNYKSSVSPMAELSHRVDDGQRNYKLSALPATNELPHHTDAGQRNYKSSVSPVAELPHRVDDGQRNYKLSALPATNELPHRTDAGQRNYKSSVSPVAELPHRVDDGQRNYKLSALPATNELPHRIDAGQRNYKSSVSPMAELPHRADDGQRNYKLSVSPAAELPHRVDDGQRNYKLSVLPATELVHYTDGQRNYKSSVLETPELLKDPDMALFFLEKNLQQGKKINNALHFANLLATTNSKFLPRGKADSIPFSSKELPEILDRFGVRPGSDDAAEMSATLQDCELPANKGEKKACATSLESIVDFVTSSFGASDVDAASTVVLSKAVESSSLAQDYTVSGVRRMAGTGQLIACHPESYPYAVFMCHLTEATTRAYKASLVGKDGTAVEAVAVCHTDTSDWNPEHAAFHVLGVKPGTVPVCHFMQPDAVVWTRRG</sequence>
<keyword id="KW-1185">Reference proteome</keyword>
<keyword id="KW-0732">Signal</keyword>
<name>BURPH_ORYSJ</name>